<reference key="1">
    <citation type="journal article" date="2009" name="BMC Genomics">
        <title>Conservation in the face of diversity: multistrain analysis of an intracellular bacterium.</title>
        <authorList>
            <person name="Dark M.J."/>
            <person name="Herndon D.R."/>
            <person name="Kappmeyer L.S."/>
            <person name="Gonzales M.P."/>
            <person name="Nordeen E."/>
            <person name="Palmer G.H."/>
            <person name="Knowles D.P. Jr."/>
            <person name="Brayton K.A."/>
        </authorList>
    </citation>
    <scope>NUCLEOTIDE SEQUENCE [LARGE SCALE GENOMIC DNA]</scope>
    <source>
        <strain>Florida</strain>
    </source>
</reference>
<sequence>MSLRSCSTEMIPEFTVTEITDLVRQVMHDTFYCIKIRGEISGLSRPSSGHVYLSLKDDNSVISAVCWHGTRLDVQFENGLEVICTGHISTYQSRYQLVIEGMVLAGQGKLAAMLEERRKKLEKEGLFDQARKKPLPLLPLKIGVITSPTGAVIRDILNRVKHRFPSHIIVWPVQVQGSQASAMVVQAILGFNNLEEPPDVIIVARGGGSIEDLWPFNDEELARTAAASKIPIVSAIGHETDFTIIDYAADVRAPTPTAAVEIVLPERQQLVSDIAHKLSKIRSAVRNVLGAKEHRLLQLYGVLTETKHKISEVGRSALAHQEKIEFLFKVALLKKQQYLDNLIGRIDRYNKEHIISVGYAVIYDNTGQHVSSANAVAPDDTIVIEWKDGKRRAAILT</sequence>
<evidence type="ECO:0000255" key="1">
    <source>
        <dbReference type="HAMAP-Rule" id="MF_00378"/>
    </source>
</evidence>
<gene>
    <name evidence="1" type="primary">xseA</name>
    <name type="ordered locus">AMF_1006</name>
</gene>
<proteinExistence type="inferred from homology"/>
<accession>B9KHB8</accession>
<organism>
    <name type="scientific">Anaplasma marginale (strain Florida)</name>
    <dbReference type="NCBI Taxonomy" id="320483"/>
    <lineage>
        <taxon>Bacteria</taxon>
        <taxon>Pseudomonadati</taxon>
        <taxon>Pseudomonadota</taxon>
        <taxon>Alphaproteobacteria</taxon>
        <taxon>Rickettsiales</taxon>
        <taxon>Anaplasmataceae</taxon>
        <taxon>Anaplasma</taxon>
    </lineage>
</organism>
<name>EX7L_ANAMF</name>
<comment type="function">
    <text evidence="1">Bidirectionally degrades single-stranded DNA into large acid-insoluble oligonucleotides, which are then degraded further into small acid-soluble oligonucleotides.</text>
</comment>
<comment type="catalytic activity">
    <reaction evidence="1">
        <text>Exonucleolytic cleavage in either 5'- to 3'- or 3'- to 5'-direction to yield nucleoside 5'-phosphates.</text>
        <dbReference type="EC" id="3.1.11.6"/>
    </reaction>
</comment>
<comment type="subunit">
    <text evidence="1">Heterooligomer composed of large and small subunits.</text>
</comment>
<comment type="subcellular location">
    <subcellularLocation>
        <location evidence="1">Cytoplasm</location>
    </subcellularLocation>
</comment>
<comment type="similarity">
    <text evidence="1">Belongs to the XseA family.</text>
</comment>
<keyword id="KW-0963">Cytoplasm</keyword>
<keyword id="KW-0269">Exonuclease</keyword>
<keyword id="KW-0378">Hydrolase</keyword>
<keyword id="KW-0540">Nuclease</keyword>
<keyword id="KW-1185">Reference proteome</keyword>
<protein>
    <recommendedName>
        <fullName evidence="1">Exodeoxyribonuclease 7 large subunit</fullName>
        <ecNumber evidence="1">3.1.11.6</ecNumber>
    </recommendedName>
    <alternativeName>
        <fullName evidence="1">Exodeoxyribonuclease VII large subunit</fullName>
        <shortName evidence="1">Exonuclease VII large subunit</shortName>
    </alternativeName>
</protein>
<dbReference type="EC" id="3.1.11.6" evidence="1"/>
<dbReference type="EMBL" id="CP001079">
    <property type="protein sequence ID" value="ACM49822.1"/>
    <property type="molecule type" value="Genomic_DNA"/>
</dbReference>
<dbReference type="SMR" id="B9KHB8"/>
<dbReference type="STRING" id="320483.AMF_1006"/>
<dbReference type="KEGG" id="amf:AMF_1006"/>
<dbReference type="eggNOG" id="COG1570">
    <property type="taxonomic scope" value="Bacteria"/>
</dbReference>
<dbReference type="HOGENOM" id="CLU_023625_2_0_5"/>
<dbReference type="Proteomes" id="UP000007307">
    <property type="component" value="Chromosome"/>
</dbReference>
<dbReference type="GO" id="GO:0005737">
    <property type="term" value="C:cytoplasm"/>
    <property type="evidence" value="ECO:0007669"/>
    <property type="project" value="UniProtKB-SubCell"/>
</dbReference>
<dbReference type="GO" id="GO:0009318">
    <property type="term" value="C:exodeoxyribonuclease VII complex"/>
    <property type="evidence" value="ECO:0007669"/>
    <property type="project" value="InterPro"/>
</dbReference>
<dbReference type="GO" id="GO:0008855">
    <property type="term" value="F:exodeoxyribonuclease VII activity"/>
    <property type="evidence" value="ECO:0007669"/>
    <property type="project" value="UniProtKB-UniRule"/>
</dbReference>
<dbReference type="GO" id="GO:0003676">
    <property type="term" value="F:nucleic acid binding"/>
    <property type="evidence" value="ECO:0007669"/>
    <property type="project" value="InterPro"/>
</dbReference>
<dbReference type="GO" id="GO:0006308">
    <property type="term" value="P:DNA catabolic process"/>
    <property type="evidence" value="ECO:0007669"/>
    <property type="project" value="UniProtKB-UniRule"/>
</dbReference>
<dbReference type="CDD" id="cd04489">
    <property type="entry name" value="ExoVII_LU_OBF"/>
    <property type="match status" value="1"/>
</dbReference>
<dbReference type="HAMAP" id="MF_00378">
    <property type="entry name" value="Exonuc_7_L"/>
    <property type="match status" value="1"/>
</dbReference>
<dbReference type="InterPro" id="IPR003753">
    <property type="entry name" value="Exonuc_VII_L"/>
</dbReference>
<dbReference type="InterPro" id="IPR020579">
    <property type="entry name" value="Exonuc_VII_lsu_C"/>
</dbReference>
<dbReference type="InterPro" id="IPR025824">
    <property type="entry name" value="OB-fold_nuc-bd_dom"/>
</dbReference>
<dbReference type="NCBIfam" id="TIGR00237">
    <property type="entry name" value="xseA"/>
    <property type="match status" value="1"/>
</dbReference>
<dbReference type="PANTHER" id="PTHR30008">
    <property type="entry name" value="EXODEOXYRIBONUCLEASE 7 LARGE SUBUNIT"/>
    <property type="match status" value="1"/>
</dbReference>
<dbReference type="PANTHER" id="PTHR30008:SF0">
    <property type="entry name" value="EXODEOXYRIBONUCLEASE 7 LARGE SUBUNIT"/>
    <property type="match status" value="1"/>
</dbReference>
<dbReference type="Pfam" id="PF02601">
    <property type="entry name" value="Exonuc_VII_L"/>
    <property type="match status" value="1"/>
</dbReference>
<dbReference type="Pfam" id="PF13742">
    <property type="entry name" value="tRNA_anti_2"/>
    <property type="match status" value="1"/>
</dbReference>
<feature type="chain" id="PRO_1000200656" description="Exodeoxyribonuclease 7 large subunit">
    <location>
        <begin position="1"/>
        <end position="397"/>
    </location>
</feature>